<comment type="function">
    <text evidence="1">Catalyzes the decarboxylation of four acetate groups of uroporphyrinogen-III to yield coproporphyrinogen-III.</text>
</comment>
<comment type="catalytic activity">
    <reaction evidence="1">
        <text>uroporphyrinogen III + 4 H(+) = coproporphyrinogen III + 4 CO2</text>
        <dbReference type="Rhea" id="RHEA:19865"/>
        <dbReference type="ChEBI" id="CHEBI:15378"/>
        <dbReference type="ChEBI" id="CHEBI:16526"/>
        <dbReference type="ChEBI" id="CHEBI:57308"/>
        <dbReference type="ChEBI" id="CHEBI:57309"/>
        <dbReference type="EC" id="4.1.1.37"/>
    </reaction>
</comment>
<comment type="pathway">
    <text evidence="1">Porphyrin-containing compound metabolism; protoporphyrin-IX biosynthesis; coproporphyrinogen-III from 5-aminolevulinate: step 4/4.</text>
</comment>
<comment type="subunit">
    <text evidence="1">Homodimer.</text>
</comment>
<comment type="subcellular location">
    <subcellularLocation>
        <location evidence="1">Cytoplasm</location>
    </subcellularLocation>
</comment>
<comment type="similarity">
    <text evidence="1">Belongs to the uroporphyrinogen decarboxylase family.</text>
</comment>
<accession>Q65W70</accession>
<evidence type="ECO:0000255" key="1">
    <source>
        <dbReference type="HAMAP-Rule" id="MF_00218"/>
    </source>
</evidence>
<name>DCUP_MANSM</name>
<feature type="chain" id="PRO_1000023916" description="Uroporphyrinogen decarboxylase">
    <location>
        <begin position="1"/>
        <end position="354"/>
    </location>
</feature>
<feature type="binding site" evidence="1">
    <location>
        <begin position="27"/>
        <end position="31"/>
    </location>
    <ligand>
        <name>substrate</name>
    </ligand>
</feature>
<feature type="binding site" evidence="1">
    <location>
        <position position="77"/>
    </location>
    <ligand>
        <name>substrate</name>
    </ligand>
</feature>
<feature type="binding site" evidence="1">
    <location>
        <position position="154"/>
    </location>
    <ligand>
        <name>substrate</name>
    </ligand>
</feature>
<feature type="binding site" evidence="1">
    <location>
        <position position="209"/>
    </location>
    <ligand>
        <name>substrate</name>
    </ligand>
</feature>
<feature type="binding site" evidence="1">
    <location>
        <position position="327"/>
    </location>
    <ligand>
        <name>substrate</name>
    </ligand>
</feature>
<feature type="site" description="Transition state stabilizer" evidence="1">
    <location>
        <position position="77"/>
    </location>
</feature>
<dbReference type="EC" id="4.1.1.37" evidence="1"/>
<dbReference type="EMBL" id="AE016827">
    <property type="protein sequence ID" value="AAU36790.1"/>
    <property type="molecule type" value="Genomic_DNA"/>
</dbReference>
<dbReference type="RefSeq" id="WP_011199365.1">
    <property type="nucleotide sequence ID" value="NC_006300.1"/>
</dbReference>
<dbReference type="SMR" id="Q65W70"/>
<dbReference type="STRING" id="221988.MS0183"/>
<dbReference type="KEGG" id="msu:MS0183"/>
<dbReference type="eggNOG" id="COG0407">
    <property type="taxonomic scope" value="Bacteria"/>
</dbReference>
<dbReference type="HOGENOM" id="CLU_040933_0_0_6"/>
<dbReference type="OrthoDB" id="9806656at2"/>
<dbReference type="UniPathway" id="UPA00251">
    <property type="reaction ID" value="UER00321"/>
</dbReference>
<dbReference type="Proteomes" id="UP000000607">
    <property type="component" value="Chromosome"/>
</dbReference>
<dbReference type="GO" id="GO:0005829">
    <property type="term" value="C:cytosol"/>
    <property type="evidence" value="ECO:0007669"/>
    <property type="project" value="TreeGrafter"/>
</dbReference>
<dbReference type="GO" id="GO:0004853">
    <property type="term" value="F:uroporphyrinogen decarboxylase activity"/>
    <property type="evidence" value="ECO:0007669"/>
    <property type="project" value="UniProtKB-UniRule"/>
</dbReference>
<dbReference type="GO" id="GO:0019353">
    <property type="term" value="P:protoporphyrinogen IX biosynthetic process from glutamate"/>
    <property type="evidence" value="ECO:0007669"/>
    <property type="project" value="TreeGrafter"/>
</dbReference>
<dbReference type="CDD" id="cd00717">
    <property type="entry name" value="URO-D"/>
    <property type="match status" value="1"/>
</dbReference>
<dbReference type="FunFam" id="3.20.20.210:FF:000001">
    <property type="entry name" value="Uroporphyrinogen decarboxylase"/>
    <property type="match status" value="1"/>
</dbReference>
<dbReference type="Gene3D" id="3.20.20.210">
    <property type="match status" value="1"/>
</dbReference>
<dbReference type="HAMAP" id="MF_00218">
    <property type="entry name" value="URO_D"/>
    <property type="match status" value="1"/>
</dbReference>
<dbReference type="InterPro" id="IPR038071">
    <property type="entry name" value="UROD/MetE-like_sf"/>
</dbReference>
<dbReference type="InterPro" id="IPR006361">
    <property type="entry name" value="Uroporphyrinogen_deCO2ase_HemE"/>
</dbReference>
<dbReference type="InterPro" id="IPR000257">
    <property type="entry name" value="Uroporphyrinogen_deCOase"/>
</dbReference>
<dbReference type="NCBIfam" id="TIGR01464">
    <property type="entry name" value="hemE"/>
    <property type="match status" value="1"/>
</dbReference>
<dbReference type="PANTHER" id="PTHR21091">
    <property type="entry name" value="METHYLTETRAHYDROFOLATE:HOMOCYSTEINE METHYLTRANSFERASE RELATED"/>
    <property type="match status" value="1"/>
</dbReference>
<dbReference type="PANTHER" id="PTHR21091:SF169">
    <property type="entry name" value="UROPORPHYRINOGEN DECARBOXYLASE"/>
    <property type="match status" value="1"/>
</dbReference>
<dbReference type="Pfam" id="PF01208">
    <property type="entry name" value="URO-D"/>
    <property type="match status" value="1"/>
</dbReference>
<dbReference type="SUPFAM" id="SSF51726">
    <property type="entry name" value="UROD/MetE-like"/>
    <property type="match status" value="1"/>
</dbReference>
<dbReference type="PROSITE" id="PS00906">
    <property type="entry name" value="UROD_1"/>
    <property type="match status" value="1"/>
</dbReference>
<dbReference type="PROSITE" id="PS00907">
    <property type="entry name" value="UROD_2"/>
    <property type="match status" value="1"/>
</dbReference>
<protein>
    <recommendedName>
        <fullName evidence="1">Uroporphyrinogen decarboxylase</fullName>
        <shortName evidence="1">UPD</shortName>
        <shortName evidence="1">URO-D</shortName>
        <ecNumber evidence="1">4.1.1.37</ecNumber>
    </recommendedName>
</protein>
<sequence>MTTLKNDRYLKALLREPVDMTPVWMMRQAGRYLPEYKATRAEAGDFMSLCRNADLACEVTLQPLRRYELDAAILFSDILTIPDAMGLGLTFGAGEGPKFDRPIETKSAVENLPIPDPEQELQYVMNAVRTIRRELNGEVPLIGFSGSPWTLATYMVEGGSTKAFTKIKKMMYAEPKLLHKLLDKVADSVVLYLNAQIKAGAQAVMIFDTWGGVLGHREYLDFSLQYMHKIVNGLIRENDGRKVPVTLFTKGGGLWLDAIADTGCDAIGLDWTVNLAQAKAQVGHKVALQGNMDPSVLYAAPERIEQEVRSILADFGEGSGHVFNLGHGIHQDVPVESPKVFVDAIHQYSKPYHK</sequence>
<reference key="1">
    <citation type="journal article" date="2004" name="Nat. Biotechnol.">
        <title>The genome sequence of the capnophilic rumen bacterium Mannheimia succiniciproducens.</title>
        <authorList>
            <person name="Hong S.H."/>
            <person name="Kim J.S."/>
            <person name="Lee S.Y."/>
            <person name="In Y.H."/>
            <person name="Choi S.S."/>
            <person name="Rih J.-K."/>
            <person name="Kim C.H."/>
            <person name="Jeong H."/>
            <person name="Hur C.G."/>
            <person name="Kim J.J."/>
        </authorList>
    </citation>
    <scope>NUCLEOTIDE SEQUENCE [LARGE SCALE GENOMIC DNA]</scope>
    <source>
        <strain>KCTC 0769BP / MBEL55E</strain>
    </source>
</reference>
<keyword id="KW-0963">Cytoplasm</keyword>
<keyword id="KW-0210">Decarboxylase</keyword>
<keyword id="KW-0456">Lyase</keyword>
<keyword id="KW-0627">Porphyrin biosynthesis</keyword>
<proteinExistence type="inferred from homology"/>
<gene>
    <name evidence="1" type="primary">hemE</name>
    <name type="ordered locus">MS0183</name>
</gene>
<organism>
    <name type="scientific">Mannheimia succiniciproducens (strain KCTC 0769BP / MBEL55E)</name>
    <dbReference type="NCBI Taxonomy" id="221988"/>
    <lineage>
        <taxon>Bacteria</taxon>
        <taxon>Pseudomonadati</taxon>
        <taxon>Pseudomonadota</taxon>
        <taxon>Gammaproteobacteria</taxon>
        <taxon>Pasteurellales</taxon>
        <taxon>Pasteurellaceae</taxon>
        <taxon>Basfia</taxon>
    </lineage>
</organism>